<reference key="1">
    <citation type="journal article" date="1999" name="J. Mol. Evol.">
        <title>Genetic characterization of plasmids containing genes encoding enzymes of leucine biosynthesis in endosymbionts (Buchnera) of aphids.</title>
        <authorList>
            <person name="Baumann L."/>
            <person name="Baumann P."/>
            <person name="Moran N.A."/>
            <person name="Sandstroem J.P."/>
            <person name="Thao M.L."/>
        </authorList>
    </citation>
    <scope>NUCLEOTIDE SEQUENCE [LARGE SCALE GENOMIC DNA]</scope>
    <source>
        <strain>Sg</strain>
    </source>
</reference>
<accession>O85064</accession>
<keyword id="KW-0028">Amino-acid biosynthesis</keyword>
<keyword id="KW-0100">Branched-chain amino acid biosynthesis</keyword>
<keyword id="KW-0963">Cytoplasm</keyword>
<keyword id="KW-0432">Leucine biosynthesis</keyword>
<keyword id="KW-0460">Magnesium</keyword>
<keyword id="KW-0464">Manganese</keyword>
<keyword id="KW-0479">Metal-binding</keyword>
<keyword id="KW-0520">NAD</keyword>
<keyword id="KW-0560">Oxidoreductase</keyword>
<keyword id="KW-0614">Plasmid</keyword>
<organism>
    <name type="scientific">Buchnera aphidicola subsp. Schizaphis graminum (strain Sg)</name>
    <dbReference type="NCBI Taxonomy" id="198804"/>
    <lineage>
        <taxon>Bacteria</taxon>
        <taxon>Pseudomonadati</taxon>
        <taxon>Pseudomonadota</taxon>
        <taxon>Gammaproteobacteria</taxon>
        <taxon>Enterobacterales</taxon>
        <taxon>Erwiniaceae</taxon>
        <taxon>Buchnera</taxon>
    </lineage>
</organism>
<dbReference type="EC" id="1.1.1.85" evidence="1"/>
<dbReference type="EMBL" id="AF041836">
    <property type="protein sequence ID" value="AAD12594.1"/>
    <property type="molecule type" value="Genomic_DNA"/>
</dbReference>
<dbReference type="RefSeq" id="NP_047181.1">
    <property type="nucleotide sequence ID" value="NC_001910.1"/>
</dbReference>
<dbReference type="SMR" id="O85064"/>
<dbReference type="UniPathway" id="UPA00048">
    <property type="reaction ID" value="UER00072"/>
</dbReference>
<dbReference type="Proteomes" id="UP000000416">
    <property type="component" value="Plasmid pLeu-Sg"/>
</dbReference>
<dbReference type="GO" id="GO:0005829">
    <property type="term" value="C:cytosol"/>
    <property type="evidence" value="ECO:0007669"/>
    <property type="project" value="TreeGrafter"/>
</dbReference>
<dbReference type="GO" id="GO:0003862">
    <property type="term" value="F:3-isopropylmalate dehydrogenase activity"/>
    <property type="evidence" value="ECO:0007669"/>
    <property type="project" value="UniProtKB-UniRule"/>
</dbReference>
<dbReference type="GO" id="GO:0000287">
    <property type="term" value="F:magnesium ion binding"/>
    <property type="evidence" value="ECO:0007669"/>
    <property type="project" value="InterPro"/>
</dbReference>
<dbReference type="GO" id="GO:0051287">
    <property type="term" value="F:NAD binding"/>
    <property type="evidence" value="ECO:0007669"/>
    <property type="project" value="InterPro"/>
</dbReference>
<dbReference type="GO" id="GO:0009098">
    <property type="term" value="P:L-leucine biosynthetic process"/>
    <property type="evidence" value="ECO:0007669"/>
    <property type="project" value="UniProtKB-UniRule"/>
</dbReference>
<dbReference type="FunFam" id="3.40.718.10:FF:000006">
    <property type="entry name" value="3-isopropylmalate dehydrogenase"/>
    <property type="match status" value="1"/>
</dbReference>
<dbReference type="Gene3D" id="3.40.718.10">
    <property type="entry name" value="Isopropylmalate Dehydrogenase"/>
    <property type="match status" value="1"/>
</dbReference>
<dbReference type="HAMAP" id="MF_01033">
    <property type="entry name" value="LeuB_type1"/>
    <property type="match status" value="1"/>
</dbReference>
<dbReference type="InterPro" id="IPR019818">
    <property type="entry name" value="IsoCit/isopropylmalate_DH_CS"/>
</dbReference>
<dbReference type="InterPro" id="IPR024084">
    <property type="entry name" value="IsoPropMal-DH-like_dom"/>
</dbReference>
<dbReference type="InterPro" id="IPR004429">
    <property type="entry name" value="Isopropylmalate_DH"/>
</dbReference>
<dbReference type="NCBIfam" id="TIGR00169">
    <property type="entry name" value="leuB"/>
    <property type="match status" value="1"/>
</dbReference>
<dbReference type="PANTHER" id="PTHR42979">
    <property type="entry name" value="3-ISOPROPYLMALATE DEHYDROGENASE"/>
    <property type="match status" value="1"/>
</dbReference>
<dbReference type="PANTHER" id="PTHR42979:SF1">
    <property type="entry name" value="3-ISOPROPYLMALATE DEHYDROGENASE"/>
    <property type="match status" value="1"/>
</dbReference>
<dbReference type="Pfam" id="PF00180">
    <property type="entry name" value="Iso_dh"/>
    <property type="match status" value="1"/>
</dbReference>
<dbReference type="SMART" id="SM01329">
    <property type="entry name" value="Iso_dh"/>
    <property type="match status" value="1"/>
</dbReference>
<dbReference type="SUPFAM" id="SSF53659">
    <property type="entry name" value="Isocitrate/Isopropylmalate dehydrogenase-like"/>
    <property type="match status" value="1"/>
</dbReference>
<dbReference type="PROSITE" id="PS00470">
    <property type="entry name" value="IDH_IMDH"/>
    <property type="match status" value="1"/>
</dbReference>
<feature type="chain" id="PRO_0000083661" description="3-isopropylmalate dehydrogenase">
    <location>
        <begin position="1"/>
        <end position="363"/>
    </location>
</feature>
<feature type="binding site" evidence="1">
    <location>
        <begin position="78"/>
        <end position="91"/>
    </location>
    <ligand>
        <name>NAD(+)</name>
        <dbReference type="ChEBI" id="CHEBI:57540"/>
    </ligand>
</feature>
<feature type="binding site" evidence="1">
    <location>
        <position position="99"/>
    </location>
    <ligand>
        <name>substrate</name>
    </ligand>
</feature>
<feature type="binding site" evidence="1">
    <location>
        <position position="109"/>
    </location>
    <ligand>
        <name>substrate</name>
    </ligand>
</feature>
<feature type="binding site" evidence="1">
    <location>
        <position position="138"/>
    </location>
    <ligand>
        <name>substrate</name>
    </ligand>
</feature>
<feature type="binding site" evidence="1">
    <location>
        <position position="227"/>
    </location>
    <ligand>
        <name>Mg(2+)</name>
        <dbReference type="ChEBI" id="CHEBI:18420"/>
    </ligand>
</feature>
<feature type="binding site" evidence="1">
    <location>
        <position position="227"/>
    </location>
    <ligand>
        <name>substrate</name>
    </ligand>
</feature>
<feature type="binding site" evidence="1">
    <location>
        <position position="251"/>
    </location>
    <ligand>
        <name>Mg(2+)</name>
        <dbReference type="ChEBI" id="CHEBI:18420"/>
    </ligand>
</feature>
<feature type="binding site" evidence="1">
    <location>
        <position position="255"/>
    </location>
    <ligand>
        <name>Mg(2+)</name>
        <dbReference type="ChEBI" id="CHEBI:18420"/>
    </ligand>
</feature>
<feature type="binding site" evidence="1">
    <location>
        <begin position="285"/>
        <end position="297"/>
    </location>
    <ligand>
        <name>NAD(+)</name>
        <dbReference type="ChEBI" id="CHEBI:57540"/>
    </ligand>
</feature>
<feature type="site" description="Important for catalysis" evidence="1">
    <location>
        <position position="145"/>
    </location>
</feature>
<feature type="site" description="Important for catalysis" evidence="1">
    <location>
        <position position="195"/>
    </location>
</feature>
<sequence>MKKKFRIAVLPGDGIGPEVMREAYKILNILERKFFLKLELREFDIGGIAIDREGIALPEKTLRGCENSDAILFGSVGGKKWDYLPIESRPERASLLPLRKHFNLFSNLRPAKLRVDLKNLSPLRSDIVRDGFDILCIRELTGGIYFGKPKGRFKNKNGEYAFDTEIYYDFEIERIANLAFELASSRRCKVCSIDKANVLESSVLWREIVKKVSKNYPDVHLSHLYIDNACMQIIKNPTQFDILLCSNIFGDIISDECAMITGSIGMLPSASLNNQKFGLYEPAGGSAPDIEGKNIANPIAQILSLSMLIRYSMNLNEIADKIDLSVHYALKEGYRTLDISDGKNYIKTNEMGDIIAEFLDNGK</sequence>
<proteinExistence type="inferred from homology"/>
<name>LEU3_BUCAP</name>
<evidence type="ECO:0000255" key="1">
    <source>
        <dbReference type="HAMAP-Rule" id="MF_01033"/>
    </source>
</evidence>
<protein>
    <recommendedName>
        <fullName evidence="1">3-isopropylmalate dehydrogenase</fullName>
        <ecNumber evidence="1">1.1.1.85</ecNumber>
    </recommendedName>
    <alternativeName>
        <fullName evidence="1">3-IPM-DH</fullName>
    </alternativeName>
    <alternativeName>
        <fullName evidence="1">Beta-IPM dehydrogenase</fullName>
        <shortName evidence="1">IMDH</shortName>
    </alternativeName>
</protein>
<gene>
    <name evidence="1" type="primary">leuB</name>
    <name type="ordered locus">BUsg_PL5</name>
</gene>
<comment type="function">
    <text evidence="1">Catalyzes the oxidation of 3-carboxy-2-hydroxy-4-methylpentanoate (3-isopropylmalate) to 3-carboxy-4-methyl-2-oxopentanoate. The product decarboxylates to 4-methyl-2 oxopentanoate.</text>
</comment>
<comment type="catalytic activity">
    <reaction evidence="1">
        <text>(2R,3S)-3-isopropylmalate + NAD(+) = 4-methyl-2-oxopentanoate + CO2 + NADH</text>
        <dbReference type="Rhea" id="RHEA:32271"/>
        <dbReference type="ChEBI" id="CHEBI:16526"/>
        <dbReference type="ChEBI" id="CHEBI:17865"/>
        <dbReference type="ChEBI" id="CHEBI:35121"/>
        <dbReference type="ChEBI" id="CHEBI:57540"/>
        <dbReference type="ChEBI" id="CHEBI:57945"/>
        <dbReference type="EC" id="1.1.1.85"/>
    </reaction>
</comment>
<comment type="cofactor">
    <cofactor evidence="1">
        <name>Mg(2+)</name>
        <dbReference type="ChEBI" id="CHEBI:18420"/>
    </cofactor>
    <cofactor evidence="1">
        <name>Mn(2+)</name>
        <dbReference type="ChEBI" id="CHEBI:29035"/>
    </cofactor>
    <text evidence="1">Binds 1 Mg(2+) or Mn(2+) ion per subunit.</text>
</comment>
<comment type="pathway">
    <text evidence="1">Amino-acid biosynthesis; L-leucine biosynthesis; L-leucine from 3-methyl-2-oxobutanoate: step 3/4.</text>
</comment>
<comment type="subunit">
    <text evidence="1">Homodimer.</text>
</comment>
<comment type="subcellular location">
    <subcellularLocation>
        <location evidence="1">Cytoplasm</location>
    </subcellularLocation>
</comment>
<comment type="similarity">
    <text evidence="1">Belongs to the isocitrate and isopropylmalate dehydrogenases family. LeuB type 1 subfamily.</text>
</comment>
<geneLocation type="plasmid">
    <name>pLeu-Sg</name>
    <name>pBSg1</name>
</geneLocation>